<organism>
    <name type="scientific">Nitratidesulfovibrio vulgaris (strain DP4)</name>
    <name type="common">Desulfovibrio vulgaris</name>
    <dbReference type="NCBI Taxonomy" id="391774"/>
    <lineage>
        <taxon>Bacteria</taxon>
        <taxon>Pseudomonadati</taxon>
        <taxon>Thermodesulfobacteriota</taxon>
        <taxon>Desulfovibrionia</taxon>
        <taxon>Desulfovibrionales</taxon>
        <taxon>Desulfovibrionaceae</taxon>
        <taxon>Nitratidesulfovibrio</taxon>
    </lineage>
</organism>
<evidence type="ECO:0000255" key="1">
    <source>
        <dbReference type="HAMAP-Rule" id="MF_00332"/>
    </source>
</evidence>
<evidence type="ECO:0000256" key="2">
    <source>
        <dbReference type="SAM" id="MobiDB-lite"/>
    </source>
</evidence>
<accession>A1VFG6</accession>
<reference key="1">
    <citation type="journal article" date="2009" name="Environ. Microbiol.">
        <title>Contribution of mobile genetic elements to Desulfovibrio vulgaris genome plasticity.</title>
        <authorList>
            <person name="Walker C.B."/>
            <person name="Stolyar S."/>
            <person name="Chivian D."/>
            <person name="Pinel N."/>
            <person name="Gabster J.A."/>
            <person name="Dehal P.S."/>
            <person name="He Z."/>
            <person name="Yang Z.K."/>
            <person name="Yen H.C."/>
            <person name="Zhou J."/>
            <person name="Wall J.D."/>
            <person name="Hazen T.C."/>
            <person name="Arkin A.P."/>
            <person name="Stahl D.A."/>
        </authorList>
    </citation>
    <scope>NUCLEOTIDE SEQUENCE [LARGE SCALE GENOMIC DNA]</scope>
    <source>
        <strain>DP4</strain>
    </source>
</reference>
<feature type="chain" id="PRO_1000059550" description="Chaperone protein DnaK">
    <location>
        <begin position="1"/>
        <end position="636"/>
    </location>
</feature>
<feature type="region of interest" description="Disordered" evidence="2">
    <location>
        <begin position="597"/>
        <end position="636"/>
    </location>
</feature>
<feature type="compositionally biased region" description="Low complexity" evidence="2">
    <location>
        <begin position="600"/>
        <end position="616"/>
    </location>
</feature>
<feature type="compositionally biased region" description="Acidic residues" evidence="2">
    <location>
        <begin position="625"/>
        <end position="636"/>
    </location>
</feature>
<feature type="modified residue" description="Phosphothreonine; by autocatalysis" evidence="1">
    <location>
        <position position="197"/>
    </location>
</feature>
<name>DNAK_NITV4</name>
<protein>
    <recommendedName>
        <fullName evidence="1">Chaperone protein DnaK</fullName>
    </recommendedName>
    <alternativeName>
        <fullName evidence="1">HSP70</fullName>
    </alternativeName>
    <alternativeName>
        <fullName evidence="1">Heat shock 70 kDa protein</fullName>
    </alternativeName>
    <alternativeName>
        <fullName evidence="1">Heat shock protein 70</fullName>
    </alternativeName>
</protein>
<dbReference type="EMBL" id="CP000527">
    <property type="protein sequence ID" value="ABM29182.1"/>
    <property type="molecule type" value="Genomic_DNA"/>
</dbReference>
<dbReference type="RefSeq" id="WP_010938112.1">
    <property type="nucleotide sequence ID" value="NC_008751.1"/>
</dbReference>
<dbReference type="SMR" id="A1VFG6"/>
<dbReference type="KEGG" id="dvl:Dvul_2166"/>
<dbReference type="HOGENOM" id="CLU_005965_2_1_7"/>
<dbReference type="Proteomes" id="UP000009173">
    <property type="component" value="Chromosome"/>
</dbReference>
<dbReference type="GO" id="GO:0005524">
    <property type="term" value="F:ATP binding"/>
    <property type="evidence" value="ECO:0007669"/>
    <property type="project" value="UniProtKB-UniRule"/>
</dbReference>
<dbReference type="GO" id="GO:0140662">
    <property type="term" value="F:ATP-dependent protein folding chaperone"/>
    <property type="evidence" value="ECO:0007669"/>
    <property type="project" value="InterPro"/>
</dbReference>
<dbReference type="GO" id="GO:0051082">
    <property type="term" value="F:unfolded protein binding"/>
    <property type="evidence" value="ECO:0007669"/>
    <property type="project" value="InterPro"/>
</dbReference>
<dbReference type="CDD" id="cd10234">
    <property type="entry name" value="ASKHA_NBD_HSP70_DnaK-like"/>
    <property type="match status" value="1"/>
</dbReference>
<dbReference type="FunFam" id="2.60.34.10:FF:000014">
    <property type="entry name" value="Chaperone protein DnaK HSP70"/>
    <property type="match status" value="1"/>
</dbReference>
<dbReference type="FunFam" id="3.30.30.30:FF:000005">
    <property type="entry name" value="Heat shock protein ssb1"/>
    <property type="match status" value="1"/>
</dbReference>
<dbReference type="FunFam" id="1.20.1270.10:FF:000001">
    <property type="entry name" value="Molecular chaperone DnaK"/>
    <property type="match status" value="1"/>
</dbReference>
<dbReference type="FunFam" id="3.30.420.40:FF:000004">
    <property type="entry name" value="Molecular chaperone DnaK"/>
    <property type="match status" value="1"/>
</dbReference>
<dbReference type="FunFam" id="3.90.640.10:FF:000003">
    <property type="entry name" value="Molecular chaperone DnaK"/>
    <property type="match status" value="1"/>
</dbReference>
<dbReference type="Gene3D" id="1.20.1270.10">
    <property type="match status" value="1"/>
</dbReference>
<dbReference type="Gene3D" id="3.30.420.40">
    <property type="match status" value="2"/>
</dbReference>
<dbReference type="Gene3D" id="3.90.640.10">
    <property type="entry name" value="Actin, Chain A, domain 4"/>
    <property type="match status" value="1"/>
</dbReference>
<dbReference type="Gene3D" id="2.60.34.10">
    <property type="entry name" value="Substrate Binding Domain Of DNAk, Chain A, domain 1"/>
    <property type="match status" value="1"/>
</dbReference>
<dbReference type="HAMAP" id="MF_00332">
    <property type="entry name" value="DnaK"/>
    <property type="match status" value="1"/>
</dbReference>
<dbReference type="InterPro" id="IPR043129">
    <property type="entry name" value="ATPase_NBD"/>
</dbReference>
<dbReference type="InterPro" id="IPR012725">
    <property type="entry name" value="Chaperone_DnaK"/>
</dbReference>
<dbReference type="InterPro" id="IPR018181">
    <property type="entry name" value="Heat_shock_70_CS"/>
</dbReference>
<dbReference type="InterPro" id="IPR029048">
    <property type="entry name" value="HSP70_C_sf"/>
</dbReference>
<dbReference type="InterPro" id="IPR029047">
    <property type="entry name" value="HSP70_peptide-bd_sf"/>
</dbReference>
<dbReference type="InterPro" id="IPR013126">
    <property type="entry name" value="Hsp_70_fam"/>
</dbReference>
<dbReference type="NCBIfam" id="NF001413">
    <property type="entry name" value="PRK00290.1"/>
    <property type="match status" value="1"/>
</dbReference>
<dbReference type="NCBIfam" id="NF003520">
    <property type="entry name" value="PRK05183.1"/>
    <property type="match status" value="1"/>
</dbReference>
<dbReference type="NCBIfam" id="TIGR02350">
    <property type="entry name" value="prok_dnaK"/>
    <property type="match status" value="1"/>
</dbReference>
<dbReference type="PANTHER" id="PTHR19375">
    <property type="entry name" value="HEAT SHOCK PROTEIN 70KDA"/>
    <property type="match status" value="1"/>
</dbReference>
<dbReference type="Pfam" id="PF00012">
    <property type="entry name" value="HSP70"/>
    <property type="match status" value="1"/>
</dbReference>
<dbReference type="PRINTS" id="PR00301">
    <property type="entry name" value="HEATSHOCK70"/>
</dbReference>
<dbReference type="SUPFAM" id="SSF53067">
    <property type="entry name" value="Actin-like ATPase domain"/>
    <property type="match status" value="2"/>
</dbReference>
<dbReference type="SUPFAM" id="SSF100934">
    <property type="entry name" value="Heat shock protein 70kD (HSP70), C-terminal subdomain"/>
    <property type="match status" value="1"/>
</dbReference>
<dbReference type="SUPFAM" id="SSF100920">
    <property type="entry name" value="Heat shock protein 70kD (HSP70), peptide-binding domain"/>
    <property type="match status" value="1"/>
</dbReference>
<dbReference type="PROSITE" id="PS00297">
    <property type="entry name" value="HSP70_1"/>
    <property type="match status" value="1"/>
</dbReference>
<dbReference type="PROSITE" id="PS00329">
    <property type="entry name" value="HSP70_2"/>
    <property type="match status" value="1"/>
</dbReference>
<dbReference type="PROSITE" id="PS01036">
    <property type="entry name" value="HSP70_3"/>
    <property type="match status" value="1"/>
</dbReference>
<comment type="function">
    <text evidence="1">Acts as a chaperone.</text>
</comment>
<comment type="induction">
    <text evidence="1">By stress conditions e.g. heat shock.</text>
</comment>
<comment type="similarity">
    <text evidence="1">Belongs to the heat shock protein 70 family.</text>
</comment>
<sequence length="636" mass="68659">MGKIIGIDLGTTNSCVYVMEGKDPKCITNPEGGRTTPSVVAFTDKERLVGDIAKRQAVTNPERTVFAVKRLMGRRGDAPEVGRWKEHSPYRIVAGANGDAAVEVQGRPYSAPEISAMILGKLKADAEAYLGETVTEAVITVPAYFNDAQRQATKDAGRIAGLDVKRIINEPTAASLAYGFDRKANEKIAVFDLGGGTFDISILEVGDNVVEVRATNGDTFLGGEDFDQRIISYLVDEFRRENGGIDLARDRMALQRLKEAAEKAKKDLSTSMETEVNLPFITADQTGPKHLMMKLSRAKLEKLVEDLVERTVEPCRKALADAGLTAAQIDEVVLVGGMTRMPLVQKRVSEFFGKEPNRSVNPDEVVAMGAAIQGGILAGDVKDVLLLDVTPLSLGIETLGGVFTRLIERNTTIPTRKSQTFTTAADNQPSVSIHVLQGERPMASDNMTLGRFELTGIPPAMRGVPQIEVSFDIDANGIVNVAAKDLGTGKEQSIRITASSGLSEDEIQRLVKEAEAHADDDKKKQELIEARNQADGLIYGTEKSIRDLGDKLDAALKADIETKVTALRGLLESEDVDAIKKASDELAQASHKLAEQLYKQQAQAGGPEAGAQPEGDAGARKQDDDVVDADYTEVKK</sequence>
<proteinExistence type="inferred from homology"/>
<keyword id="KW-0067">ATP-binding</keyword>
<keyword id="KW-0143">Chaperone</keyword>
<keyword id="KW-0547">Nucleotide-binding</keyword>
<keyword id="KW-0597">Phosphoprotein</keyword>
<keyword id="KW-0346">Stress response</keyword>
<gene>
    <name evidence="1" type="primary">dnaK</name>
    <name type="ordered locus">Dvul_2166</name>
</gene>